<dbReference type="EMBL" id="AL049746">
    <property type="protein sequence ID" value="CAB41864.1"/>
    <property type="molecule type" value="Genomic_DNA"/>
</dbReference>
<dbReference type="EMBL" id="CP002686">
    <property type="protein sequence ID" value="AEE78331.1"/>
    <property type="molecule type" value="Genomic_DNA"/>
</dbReference>
<dbReference type="EMBL" id="CP002686">
    <property type="protein sequence ID" value="AEE78332.1"/>
    <property type="molecule type" value="Genomic_DNA"/>
</dbReference>
<dbReference type="EMBL" id="CP002686">
    <property type="protein sequence ID" value="AEE78333.1"/>
    <property type="molecule type" value="Genomic_DNA"/>
</dbReference>
<dbReference type="EMBL" id="BT002774">
    <property type="protein sequence ID" value="AAO22602.1"/>
    <property type="molecule type" value="mRNA"/>
</dbReference>
<dbReference type="EMBL" id="BT004347">
    <property type="protein sequence ID" value="AAO42341.1"/>
    <property type="molecule type" value="mRNA"/>
</dbReference>
<dbReference type="EMBL" id="AK317472">
    <property type="protein sequence ID" value="BAH20137.1"/>
    <property type="molecule type" value="mRNA"/>
</dbReference>
<dbReference type="PIR" id="T07720">
    <property type="entry name" value="T07720"/>
</dbReference>
<dbReference type="RefSeq" id="NP_190365.3">
    <property type="nucleotide sequence ID" value="NM_114649.4"/>
</dbReference>
<dbReference type="RefSeq" id="NP_974399.2">
    <property type="nucleotide sequence ID" value="NM_202670.3"/>
</dbReference>
<dbReference type="RefSeq" id="NP_974400.1">
    <property type="nucleotide sequence ID" value="NM_202671.3"/>
</dbReference>
<dbReference type="SMR" id="Q9STT2"/>
<dbReference type="BioGRID" id="9255">
    <property type="interactions" value="5"/>
</dbReference>
<dbReference type="FunCoup" id="Q9STT2">
    <property type="interactions" value="4288"/>
</dbReference>
<dbReference type="IntAct" id="Q9STT2">
    <property type="interactions" value="6"/>
</dbReference>
<dbReference type="STRING" id="3702.Q9STT2"/>
<dbReference type="PaxDb" id="3702-AT3G47810.2"/>
<dbReference type="ProteomicsDB" id="242738"/>
<dbReference type="EnsemblPlants" id="AT3G47810.1">
    <property type="protein sequence ID" value="AT3G47810.1"/>
    <property type="gene ID" value="AT3G47810"/>
</dbReference>
<dbReference type="EnsemblPlants" id="AT3G47810.2">
    <property type="protein sequence ID" value="AT3G47810.2"/>
    <property type="gene ID" value="AT3G47810"/>
</dbReference>
<dbReference type="EnsemblPlants" id="AT3G47810.3">
    <property type="protein sequence ID" value="AT3G47810.3"/>
    <property type="gene ID" value="AT3G47810"/>
</dbReference>
<dbReference type="GeneID" id="823935"/>
<dbReference type="Gramene" id="AT3G47810.1">
    <property type="protein sequence ID" value="AT3G47810.1"/>
    <property type="gene ID" value="AT3G47810"/>
</dbReference>
<dbReference type="Gramene" id="AT3G47810.2">
    <property type="protein sequence ID" value="AT3G47810.2"/>
    <property type="gene ID" value="AT3G47810"/>
</dbReference>
<dbReference type="Gramene" id="AT3G47810.3">
    <property type="protein sequence ID" value="AT3G47810.3"/>
    <property type="gene ID" value="AT3G47810"/>
</dbReference>
<dbReference type="KEGG" id="ath:AT3G47810"/>
<dbReference type="Araport" id="AT3G47810"/>
<dbReference type="TAIR" id="AT3G47810">
    <property type="gene designation" value="MAG1"/>
</dbReference>
<dbReference type="eggNOG" id="KOG3325">
    <property type="taxonomic scope" value="Eukaryota"/>
</dbReference>
<dbReference type="HOGENOM" id="CLU_063749_0_1_1"/>
<dbReference type="InParanoid" id="Q9STT2"/>
<dbReference type="OMA" id="VRGNMDY"/>
<dbReference type="OrthoDB" id="10258130at2759"/>
<dbReference type="PhylomeDB" id="Q9STT2"/>
<dbReference type="PRO" id="PR:Q9STT2"/>
<dbReference type="Proteomes" id="UP000006548">
    <property type="component" value="Chromosome 3"/>
</dbReference>
<dbReference type="ExpressionAtlas" id="Q9STT2">
    <property type="expression patterns" value="baseline and differential"/>
</dbReference>
<dbReference type="GO" id="GO:0005829">
    <property type="term" value="C:cytosol"/>
    <property type="evidence" value="ECO:0007005"/>
    <property type="project" value="TAIR"/>
</dbReference>
<dbReference type="GO" id="GO:0005794">
    <property type="term" value="C:Golgi apparatus"/>
    <property type="evidence" value="ECO:0007669"/>
    <property type="project" value="UniProtKB-SubCell"/>
</dbReference>
<dbReference type="GO" id="GO:0043231">
    <property type="term" value="C:intracellular membrane-bounded organelle"/>
    <property type="evidence" value="ECO:0000314"/>
    <property type="project" value="TAIR"/>
</dbReference>
<dbReference type="GO" id="GO:0031902">
    <property type="term" value="C:late endosome membrane"/>
    <property type="evidence" value="ECO:0007669"/>
    <property type="project" value="UniProtKB-SubCell"/>
</dbReference>
<dbReference type="GO" id="GO:0016020">
    <property type="term" value="C:membrane"/>
    <property type="evidence" value="ECO:0000314"/>
    <property type="project" value="TAIR"/>
</dbReference>
<dbReference type="GO" id="GO:0005771">
    <property type="term" value="C:multivesicular body"/>
    <property type="evidence" value="ECO:0000314"/>
    <property type="project" value="TAIR"/>
</dbReference>
<dbReference type="GO" id="GO:0030904">
    <property type="term" value="C:retromer complex"/>
    <property type="evidence" value="ECO:0000314"/>
    <property type="project" value="TAIR"/>
</dbReference>
<dbReference type="GO" id="GO:0009734">
    <property type="term" value="P:auxin-activated signaling pathway"/>
    <property type="evidence" value="ECO:0007669"/>
    <property type="project" value="UniProtKB-KW"/>
</dbReference>
<dbReference type="GO" id="GO:0006623">
    <property type="term" value="P:protein targeting to vacuole"/>
    <property type="evidence" value="ECO:0000315"/>
    <property type="project" value="TAIR"/>
</dbReference>
<dbReference type="GO" id="GO:0001881">
    <property type="term" value="P:receptor recycling"/>
    <property type="evidence" value="ECO:0000314"/>
    <property type="project" value="TAIR"/>
</dbReference>
<dbReference type="GO" id="GO:2000012">
    <property type="term" value="P:regulation of auxin polar transport"/>
    <property type="evidence" value="ECO:0000315"/>
    <property type="project" value="UniProtKB"/>
</dbReference>
<dbReference type="GO" id="GO:0042147">
    <property type="term" value="P:retrograde transport, endosome to Golgi"/>
    <property type="evidence" value="ECO:0007669"/>
    <property type="project" value="InterPro"/>
</dbReference>
<dbReference type="GO" id="GO:0007034">
    <property type="term" value="P:vacuolar transport"/>
    <property type="evidence" value="ECO:0000315"/>
    <property type="project" value="TAIR"/>
</dbReference>
<dbReference type="CDD" id="cd07394">
    <property type="entry name" value="MPP_Vps29"/>
    <property type="match status" value="1"/>
</dbReference>
<dbReference type="FunFam" id="3.60.21.10:FF:000015">
    <property type="entry name" value="Vacuolar protein sorting-associated protein 29"/>
    <property type="match status" value="1"/>
</dbReference>
<dbReference type="Gene3D" id="3.60.21.10">
    <property type="match status" value="1"/>
</dbReference>
<dbReference type="InterPro" id="IPR024654">
    <property type="entry name" value="Calcineurin-like_PHP_lpxH"/>
</dbReference>
<dbReference type="InterPro" id="IPR029052">
    <property type="entry name" value="Metallo-depent_PP-like"/>
</dbReference>
<dbReference type="InterPro" id="IPR000979">
    <property type="entry name" value="Phosphodiesterase_MJ0936/Vps29"/>
</dbReference>
<dbReference type="InterPro" id="IPR028661">
    <property type="entry name" value="Vps29"/>
</dbReference>
<dbReference type="NCBIfam" id="TIGR00040">
    <property type="entry name" value="yfcE"/>
    <property type="match status" value="1"/>
</dbReference>
<dbReference type="PANTHER" id="PTHR11124">
    <property type="entry name" value="VACUOLAR SORTING PROTEIN VPS29"/>
    <property type="match status" value="1"/>
</dbReference>
<dbReference type="Pfam" id="PF12850">
    <property type="entry name" value="Metallophos_2"/>
    <property type="match status" value="1"/>
</dbReference>
<dbReference type="SUPFAM" id="SSF56300">
    <property type="entry name" value="Metallo-dependent phosphatases"/>
    <property type="match status" value="1"/>
</dbReference>
<comment type="function">
    <text evidence="2 3 4">Plays a role in vesicular protein sorting. Component of the membrane-associated retromer complex which is essential in endosome-to-Golgi retrograde transport. Required for the auxin-carrier protein PIN2 sorting to the lytic vacuolar pathway and the PIN1 recycling to the plasma membrane, thus influencing auxin transport orientation (PubMed:29897620). Also involved in the efficient sorting of seed storage proteins globulin 12S and albumin 2S. The VPS29-VPS26-VPS35 subcomplex may be involved in recycling of specific cargos from endosome to the plasma membrane.</text>
</comment>
<comment type="subunit">
    <text>Component of the retromer complex which consists of VPS29 (MAG1), VPS26 (VPS26A or VPS26B), VPS35 (VPS35A or VPS35B or VPS35C), VPS5/17 (SNX1 or SNX2A or SNX2B). Component of a retromer subcomplex consisting of VPS29 (MAG1), VPS26 (VPS26A or VPS26B), VPS35 (VPS35A or VPS35B or VPS35C).</text>
</comment>
<comment type="subcellular location">
    <subcellularLocation>
        <location>Cytoplasm</location>
    </subcellularLocation>
    <subcellularLocation>
        <location>Endosome membrane</location>
        <topology>Peripheral membrane protein</topology>
        <orientation>Cytoplasmic side</orientation>
    </subcellularLocation>
    <subcellularLocation>
        <location>Prevacuolar compartment membrane</location>
        <topology>Peripheral membrane protein</topology>
        <orientation>Cytoplasmic side</orientation>
    </subcellularLocation>
    <subcellularLocation>
        <location>Golgi apparatus</location>
        <location>trans-Golgi network membrane</location>
        <topology>Peripheral membrane protein</topology>
        <orientation>Cytoplasmic side</orientation>
    </subcellularLocation>
    <subcellularLocation>
        <location evidence="4">Late endosome membrane</location>
        <topology evidence="4">Peripheral membrane protein</topology>
    </subcellularLocation>
    <text evidence="4">Colocalizes with and mobilized by VPS38/USL1 at late endosomes, probably in a PI3K complex-dependent manner.</text>
</comment>
<comment type="disruption phenotype">
    <text evidence="1 2 4">Dwarf phenotype with several auxin-related defects (PubMed:17889650, PubMed:29897620). Reduced primary root length and fewer secondary roots (PubMed:17889650, PubMed:29897620). Abnormal cotyledon shape, number and positioning (PubMed:17889650, PubMed:29897620). Accumulation of storage proteins globulin 12S and albumin 2S in dry seeds (PubMed:16926167).</text>
</comment>
<comment type="similarity">
    <text evidence="6">Belongs to the VPS29 family.</text>
</comment>
<name>VPS29_ARATH</name>
<accession>Q9STT2</accession>
<accession>Q3EAN1</accession>
<organism>
    <name type="scientific">Arabidopsis thaliana</name>
    <name type="common">Mouse-ear cress</name>
    <dbReference type="NCBI Taxonomy" id="3702"/>
    <lineage>
        <taxon>Eukaryota</taxon>
        <taxon>Viridiplantae</taxon>
        <taxon>Streptophyta</taxon>
        <taxon>Embryophyta</taxon>
        <taxon>Tracheophyta</taxon>
        <taxon>Spermatophyta</taxon>
        <taxon>Magnoliopsida</taxon>
        <taxon>eudicotyledons</taxon>
        <taxon>Gunneridae</taxon>
        <taxon>Pentapetalae</taxon>
        <taxon>rosids</taxon>
        <taxon>malvids</taxon>
        <taxon>Brassicales</taxon>
        <taxon>Brassicaceae</taxon>
        <taxon>Camelineae</taxon>
        <taxon>Arabidopsis</taxon>
    </lineage>
</organism>
<sequence>MVLVLALGDLHVPHRAADLPPKFKSMLVPGKIQHIICTGNLCIKEIHDYLKTICPDLHIVRGEFDEDARYPENKTLTIGQFKLGLCHGHQVIPWGDLDSLAMLQRQLGVDILVTGHTHQFTAYKHEGGVVINPGSATGAYSSINQDVNPSFVLMDIDGFRAVVYVYELIDGEVKVDKIEFKKPPTTSSGP</sequence>
<feature type="chain" id="PRO_0000414723" description="Vacuolar protein sorting-associated protein 29">
    <location>
        <begin position="1"/>
        <end position="190"/>
    </location>
</feature>
<proteinExistence type="evidence at protein level"/>
<protein>
    <recommendedName>
        <fullName evidence="5">Vacuolar protein sorting-associated protein 29</fullName>
    </recommendedName>
    <alternativeName>
        <fullName evidence="5">Protein MAIGO 1</fullName>
    </alternativeName>
    <alternativeName>
        <fullName evidence="5">Vesicle protein sorting 29</fullName>
    </alternativeName>
</protein>
<gene>
    <name evidence="5" type="primary">VPS29</name>
    <name evidence="5" type="synonym">MAG1</name>
    <name evidence="7" type="ordered locus">At3g47810</name>
    <name evidence="8" type="ORF">T23J7.140</name>
</gene>
<evidence type="ECO:0000269" key="1">
    <source>
    </source>
</evidence>
<evidence type="ECO:0000269" key="2">
    <source>
    </source>
</evidence>
<evidence type="ECO:0000269" key="3">
    <source>
    </source>
</evidence>
<evidence type="ECO:0000269" key="4">
    <source>
    </source>
</evidence>
<evidence type="ECO:0000303" key="5">
    <source>
    </source>
</evidence>
<evidence type="ECO:0000305" key="6"/>
<evidence type="ECO:0000312" key="7">
    <source>
        <dbReference type="Araport" id="AT3G47810"/>
    </source>
</evidence>
<evidence type="ECO:0000312" key="8">
    <source>
        <dbReference type="EMBL" id="CAB41864.1"/>
    </source>
</evidence>
<keyword id="KW-0927">Auxin signaling pathway</keyword>
<keyword id="KW-0963">Cytoplasm</keyword>
<keyword id="KW-0967">Endosome</keyword>
<keyword id="KW-0333">Golgi apparatus</keyword>
<keyword id="KW-0472">Membrane</keyword>
<keyword id="KW-0653">Protein transport</keyword>
<keyword id="KW-1185">Reference proteome</keyword>
<keyword id="KW-0813">Transport</keyword>
<reference key="1">
    <citation type="journal article" date="2000" name="Nature">
        <title>Sequence and analysis of chromosome 3 of the plant Arabidopsis thaliana.</title>
        <authorList>
            <person name="Salanoubat M."/>
            <person name="Lemcke K."/>
            <person name="Rieger M."/>
            <person name="Ansorge W."/>
            <person name="Unseld M."/>
            <person name="Fartmann B."/>
            <person name="Valle G."/>
            <person name="Bloecker H."/>
            <person name="Perez-Alonso M."/>
            <person name="Obermaier B."/>
            <person name="Delseny M."/>
            <person name="Boutry M."/>
            <person name="Grivell L.A."/>
            <person name="Mache R."/>
            <person name="Puigdomenech P."/>
            <person name="De Simone V."/>
            <person name="Choisne N."/>
            <person name="Artiguenave F."/>
            <person name="Robert C."/>
            <person name="Brottier P."/>
            <person name="Wincker P."/>
            <person name="Cattolico L."/>
            <person name="Weissenbach J."/>
            <person name="Saurin W."/>
            <person name="Quetier F."/>
            <person name="Schaefer M."/>
            <person name="Mueller-Auer S."/>
            <person name="Gabel C."/>
            <person name="Fuchs M."/>
            <person name="Benes V."/>
            <person name="Wurmbach E."/>
            <person name="Drzonek H."/>
            <person name="Erfle H."/>
            <person name="Jordan N."/>
            <person name="Bangert S."/>
            <person name="Wiedelmann R."/>
            <person name="Kranz H."/>
            <person name="Voss H."/>
            <person name="Holland R."/>
            <person name="Brandt P."/>
            <person name="Nyakatura G."/>
            <person name="Vezzi A."/>
            <person name="D'Angelo M."/>
            <person name="Pallavicini A."/>
            <person name="Toppo S."/>
            <person name="Simionati B."/>
            <person name="Conrad A."/>
            <person name="Hornischer K."/>
            <person name="Kauer G."/>
            <person name="Loehnert T.-H."/>
            <person name="Nordsiek G."/>
            <person name="Reichelt J."/>
            <person name="Scharfe M."/>
            <person name="Schoen O."/>
            <person name="Bargues M."/>
            <person name="Terol J."/>
            <person name="Climent J."/>
            <person name="Navarro P."/>
            <person name="Collado C."/>
            <person name="Perez-Perez A."/>
            <person name="Ottenwaelder B."/>
            <person name="Duchemin D."/>
            <person name="Cooke R."/>
            <person name="Laudie M."/>
            <person name="Berger-Llauro C."/>
            <person name="Purnelle B."/>
            <person name="Masuy D."/>
            <person name="de Haan M."/>
            <person name="Maarse A.C."/>
            <person name="Alcaraz J.-P."/>
            <person name="Cottet A."/>
            <person name="Casacuberta E."/>
            <person name="Monfort A."/>
            <person name="Argiriou A."/>
            <person name="Flores M."/>
            <person name="Liguori R."/>
            <person name="Vitale D."/>
            <person name="Mannhaupt G."/>
            <person name="Haase D."/>
            <person name="Schoof H."/>
            <person name="Rudd S."/>
            <person name="Zaccaria P."/>
            <person name="Mewes H.-W."/>
            <person name="Mayer K.F.X."/>
            <person name="Kaul S."/>
            <person name="Town C.D."/>
            <person name="Koo H.L."/>
            <person name="Tallon L.J."/>
            <person name="Jenkins J."/>
            <person name="Rooney T."/>
            <person name="Rizzo M."/>
            <person name="Walts A."/>
            <person name="Utterback T."/>
            <person name="Fujii C.Y."/>
            <person name="Shea T.P."/>
            <person name="Creasy T.H."/>
            <person name="Haas B."/>
            <person name="Maiti R."/>
            <person name="Wu D."/>
            <person name="Peterson J."/>
            <person name="Van Aken S."/>
            <person name="Pai G."/>
            <person name="Militscher J."/>
            <person name="Sellers P."/>
            <person name="Gill J.E."/>
            <person name="Feldblyum T.V."/>
            <person name="Preuss D."/>
            <person name="Lin X."/>
            <person name="Nierman W.C."/>
            <person name="Salzberg S.L."/>
            <person name="White O."/>
            <person name="Venter J.C."/>
            <person name="Fraser C.M."/>
            <person name="Kaneko T."/>
            <person name="Nakamura Y."/>
            <person name="Sato S."/>
            <person name="Kato T."/>
            <person name="Asamizu E."/>
            <person name="Sasamoto S."/>
            <person name="Kimura T."/>
            <person name="Idesawa K."/>
            <person name="Kawashima K."/>
            <person name="Kishida Y."/>
            <person name="Kiyokawa C."/>
            <person name="Kohara M."/>
            <person name="Matsumoto M."/>
            <person name="Matsuno A."/>
            <person name="Muraki A."/>
            <person name="Nakayama S."/>
            <person name="Nakazaki N."/>
            <person name="Shinpo S."/>
            <person name="Takeuchi C."/>
            <person name="Wada T."/>
            <person name="Watanabe A."/>
            <person name="Yamada M."/>
            <person name="Yasuda M."/>
            <person name="Tabata S."/>
        </authorList>
    </citation>
    <scope>NUCLEOTIDE SEQUENCE [LARGE SCALE GENOMIC DNA]</scope>
    <source>
        <strain>cv. Columbia</strain>
    </source>
</reference>
<reference key="2">
    <citation type="journal article" date="2017" name="Plant J.">
        <title>Araport11: a complete reannotation of the Arabidopsis thaliana reference genome.</title>
        <authorList>
            <person name="Cheng C.Y."/>
            <person name="Krishnakumar V."/>
            <person name="Chan A.P."/>
            <person name="Thibaud-Nissen F."/>
            <person name="Schobel S."/>
            <person name="Town C.D."/>
        </authorList>
    </citation>
    <scope>GENOME REANNOTATION</scope>
    <source>
        <strain>cv. Columbia</strain>
    </source>
</reference>
<reference key="3">
    <citation type="journal article" date="2003" name="Science">
        <title>Empirical analysis of transcriptional activity in the Arabidopsis genome.</title>
        <authorList>
            <person name="Yamada K."/>
            <person name="Lim J."/>
            <person name="Dale J.M."/>
            <person name="Chen H."/>
            <person name="Shinn P."/>
            <person name="Palm C.J."/>
            <person name="Southwick A.M."/>
            <person name="Wu H.C."/>
            <person name="Kim C.J."/>
            <person name="Nguyen M."/>
            <person name="Pham P.K."/>
            <person name="Cheuk R.F."/>
            <person name="Karlin-Newmann G."/>
            <person name="Liu S.X."/>
            <person name="Lam B."/>
            <person name="Sakano H."/>
            <person name="Wu T."/>
            <person name="Yu G."/>
            <person name="Miranda M."/>
            <person name="Quach H.L."/>
            <person name="Tripp M."/>
            <person name="Chang C.H."/>
            <person name="Lee J.M."/>
            <person name="Toriumi M.J."/>
            <person name="Chan M.M."/>
            <person name="Tang C.C."/>
            <person name="Onodera C.S."/>
            <person name="Deng J.M."/>
            <person name="Akiyama K."/>
            <person name="Ansari Y."/>
            <person name="Arakawa T."/>
            <person name="Banh J."/>
            <person name="Banno F."/>
            <person name="Bowser L."/>
            <person name="Brooks S.Y."/>
            <person name="Carninci P."/>
            <person name="Chao Q."/>
            <person name="Choy N."/>
            <person name="Enju A."/>
            <person name="Goldsmith A.D."/>
            <person name="Gurjal M."/>
            <person name="Hansen N.F."/>
            <person name="Hayashizaki Y."/>
            <person name="Johnson-Hopson C."/>
            <person name="Hsuan V.W."/>
            <person name="Iida K."/>
            <person name="Karnes M."/>
            <person name="Khan S."/>
            <person name="Koesema E."/>
            <person name="Ishida J."/>
            <person name="Jiang P.X."/>
            <person name="Jones T."/>
            <person name="Kawai J."/>
            <person name="Kamiya A."/>
            <person name="Meyers C."/>
            <person name="Nakajima M."/>
            <person name="Narusaka M."/>
            <person name="Seki M."/>
            <person name="Sakurai T."/>
            <person name="Satou M."/>
            <person name="Tamse R."/>
            <person name="Vaysberg M."/>
            <person name="Wallender E.K."/>
            <person name="Wong C."/>
            <person name="Yamamura Y."/>
            <person name="Yuan S."/>
            <person name="Shinozaki K."/>
            <person name="Davis R.W."/>
            <person name="Theologis A."/>
            <person name="Ecker J.R."/>
        </authorList>
    </citation>
    <scope>NUCLEOTIDE SEQUENCE [LARGE SCALE MRNA]</scope>
    <source>
        <strain>cv. Columbia</strain>
    </source>
</reference>
<reference key="4">
    <citation type="journal article" date="2009" name="DNA Res.">
        <title>Analysis of multiple occurrences of alternative splicing events in Arabidopsis thaliana using novel sequenced full-length cDNAs.</title>
        <authorList>
            <person name="Iida K."/>
            <person name="Fukami-Kobayashi K."/>
            <person name="Toyoda A."/>
            <person name="Sakaki Y."/>
            <person name="Kobayashi M."/>
            <person name="Seki M."/>
            <person name="Shinozaki K."/>
        </authorList>
    </citation>
    <scope>NUCLEOTIDE SEQUENCE [LARGE SCALE MRNA]</scope>
    <source>
        <strain>cv. Columbia</strain>
        <tissue>Rosette leaf</tissue>
    </source>
</reference>
<reference key="5">
    <citation type="journal article" date="2006" name="Plant Cell">
        <title>Plant retromer, localized to the prevacuolar compartment and microvesicles in Arabidopsis, may interact with vacuolar sorting receptors.</title>
        <authorList>
            <person name="Oliviusson P."/>
            <person name="Heinzerling O."/>
            <person name="Hillmer S."/>
            <person name="Hinz G."/>
            <person name="Tse Y.C."/>
            <person name="Jiang L."/>
            <person name="Robinson D.G."/>
        </authorList>
    </citation>
    <scope>COMPONENT OF THE RETROMER COMPLEX</scope>
    <scope>SUBCELLULAR LOCATION</scope>
</reference>
<reference key="6">
    <citation type="journal article" date="2006" name="Plant Cell Physiol.">
        <title>AtVPS29, a putative component of a retromer complex, is required for the efficient sorting of seed storage proteins.</title>
        <authorList>
            <person name="Shimada T."/>
            <person name="Koumoto Y."/>
            <person name="Li L."/>
            <person name="Yamazaki M."/>
            <person name="Kondo M."/>
            <person name="Nishimura M."/>
            <person name="Hara-Nishimura I."/>
        </authorList>
    </citation>
    <scope>DISRUPTION PHENOTYPE</scope>
</reference>
<reference key="7">
    <citation type="journal article" date="2007" name="Cell">
        <title>The retromer protein VPS29 links cell polarity and organ initiation in plants.</title>
        <authorList>
            <person name="Jaillais Y."/>
            <person name="Santambrogio M."/>
            <person name="Rozier F."/>
            <person name="Fobis-Loisy I."/>
            <person name="Miege C."/>
            <person name="Gaude T."/>
        </authorList>
    </citation>
    <scope>FUNCTION</scope>
    <scope>DISRUPTION PHENOTYPE</scope>
    <scope>COMPONENT OF THE VPS26-VPS29-VPS35 RETROMER SUBCOMPLEX</scope>
    <scope>SUBCELLULAR LOCATION</scope>
</reference>
<reference key="8">
    <citation type="journal article" date="2008" name="Proc. Natl. Acad. Sci. U.S.A.">
        <title>Differential degradation of PIN2 auxin efflux carrier by retromer-dependent vacuolar targeting.</title>
        <authorList>
            <person name="Kleine-Vehn J."/>
            <person name="Leitner J."/>
            <person name="Zwiewka M."/>
            <person name="Sauer M."/>
            <person name="Abas L."/>
            <person name="Luschnig C."/>
            <person name="Friml J."/>
        </authorList>
    </citation>
    <scope>FUNCTION</scope>
</reference>
<reference key="9">
    <citation type="journal article" date="2010" name="Plant Cell">
        <title>Analyses of sorting nexins reveal distinct retromer-subcomplex functions in development and protein sorting in Arabidopsis thaliana.</title>
        <authorList>
            <person name="Pourcher M."/>
            <person name="Santambrogio M."/>
            <person name="Thazar N."/>
            <person name="Thierry A.M."/>
            <person name="Fobis-Loisy I."/>
            <person name="Miege C."/>
            <person name="Jaillais Y."/>
            <person name="Gaude T."/>
        </authorList>
    </citation>
    <scope>SUBCELLULAR LOCATION</scope>
</reference>
<reference key="10">
    <citation type="journal article" date="2010" name="Plant J.">
        <title>Retromer recycles vacuolar sorting receptors from the trans-Golgi network.</title>
        <authorList>
            <person name="Niemes S."/>
            <person name="Langhans M."/>
            <person name="Viotti C."/>
            <person name="Scheuring D."/>
            <person name="San Wan Yan M."/>
            <person name="Jiang L."/>
            <person name="Hillmer S."/>
            <person name="Robinson D.G."/>
            <person name="Pimpl P."/>
        </authorList>
    </citation>
    <scope>SUBCELLULAR LOCATION</scope>
</reference>
<reference key="11">
    <citation type="journal article" date="2018" name="New Phytol.">
        <title>The Arabidopsis USL1 controls multiple aspects of development by affecting late endosome morphology.</title>
        <authorList>
            <person name="Yuan R."/>
            <person name="Lan J."/>
            <person name="Fang Y."/>
            <person name="Yu H."/>
            <person name="Zhang J."/>
            <person name="Huang J."/>
            <person name="Qin G."/>
        </authorList>
    </citation>
    <scope>FUNCTION</scope>
    <scope>DISRUPTION PHENOTYPE</scope>
    <scope>SUBCELLULAR LOCATION</scope>
    <scope>SUBUNIT</scope>
    <source>
        <strain>cv. Columbia</strain>
    </source>
</reference>